<sequence length="76" mass="8768">MRHCACLFHLFLIGFLCNVYFSACTHTSSLKESDDESPRAEHWGSDGKRILRANDSEFLLTEERILLILLWSPLGR</sequence>
<organism>
    <name type="scientific">Plasmopara viticola</name>
    <name type="common">Downy mildew of grapevine</name>
    <name type="synonym">Botrytis viticola</name>
    <dbReference type="NCBI Taxonomy" id="143451"/>
    <lineage>
        <taxon>Eukaryota</taxon>
        <taxon>Sar</taxon>
        <taxon>Stramenopiles</taxon>
        <taxon>Oomycota</taxon>
        <taxon>Peronosporales</taxon>
        <taxon>Peronosporaceae</taxon>
        <taxon>Plasmopara</taxon>
    </lineage>
</organism>
<feature type="signal peptide" evidence="1">
    <location>
        <begin position="1"/>
        <end position="24"/>
    </location>
</feature>
<feature type="chain" id="PRO_0000447911" description="Secreted RxLR effector protein 31">
    <location>
        <begin position="25"/>
        <end position="76"/>
    </location>
</feature>
<feature type="short sequence motif" description="RxLR-dEER" evidence="6">
    <location>
        <begin position="49"/>
        <end position="64"/>
    </location>
</feature>
<feature type="glycosylation site" description="N-linked (GlcNAc...) asparagine" evidence="2">
    <location>
        <position position="54"/>
    </location>
</feature>
<keyword id="KW-0325">Glycoprotein</keyword>
<keyword id="KW-1035">Host cytoplasm</keyword>
<keyword id="KW-1048">Host nucleus</keyword>
<keyword id="KW-0964">Secreted</keyword>
<keyword id="KW-0732">Signal</keyword>
<keyword id="KW-0843">Virulence</keyword>
<gene>
    <name evidence="4" type="primary">RXLR31</name>
</gene>
<dbReference type="GlyCosmos" id="P0CV02">
    <property type="glycosylation" value="1 site, No reported glycans"/>
</dbReference>
<dbReference type="GO" id="GO:0005576">
    <property type="term" value="C:extracellular region"/>
    <property type="evidence" value="ECO:0007669"/>
    <property type="project" value="UniProtKB-SubCell"/>
</dbReference>
<dbReference type="GO" id="GO:0030430">
    <property type="term" value="C:host cell cytoplasm"/>
    <property type="evidence" value="ECO:0007669"/>
    <property type="project" value="UniProtKB-SubCell"/>
</dbReference>
<dbReference type="GO" id="GO:0042025">
    <property type="term" value="C:host cell nucleus"/>
    <property type="evidence" value="ECO:0007669"/>
    <property type="project" value="UniProtKB-SubCell"/>
</dbReference>
<accession>P0CV02</accession>
<reference key="1">
    <citation type="journal article" date="2018" name="Front. Plant Sci.">
        <title>In planta functional analysis and subcellular localization of the oomycete pathogen Plasmopara viticola candidate RXLR effector repertoire.</title>
        <authorList>
            <person name="Liu Y."/>
            <person name="Lan X."/>
            <person name="Song S."/>
            <person name="Yin L."/>
            <person name="Dry I.B."/>
            <person name="Qu J."/>
            <person name="Xiang J."/>
            <person name="Lu J."/>
        </authorList>
    </citation>
    <scope>NUCLEOTIDE SEQUENCE [MRNA]</scope>
    <scope>DOMAIN</scope>
    <scope>FUNCTION</scope>
    <scope>SUBCELLULAR LOCATION</scope>
</reference>
<comment type="function">
    <text evidence="3">Secreted effector that dos not suppress the host cell death induced by cell death-inducing proteins.</text>
</comment>
<comment type="subcellular location">
    <subcellularLocation>
        <location evidence="3">Secreted</location>
    </subcellularLocation>
    <subcellularLocation>
        <location evidence="3">Host nucleus</location>
    </subcellularLocation>
    <subcellularLocation>
        <location evidence="3">Host cytoplasm</location>
    </subcellularLocation>
</comment>
<comment type="domain">
    <text evidence="6">The RxLR-dEER motif acts to carry the protein into the host cell cytoplasm through binding to cell surface phosphatidylinositol-3-phosphate.</text>
</comment>
<comment type="similarity">
    <text evidence="5">Belongs to the RxLR effector family.</text>
</comment>
<evidence type="ECO:0000255" key="1"/>
<evidence type="ECO:0000255" key="2">
    <source>
        <dbReference type="PROSITE-ProRule" id="PRU00498"/>
    </source>
</evidence>
<evidence type="ECO:0000269" key="3">
    <source>
    </source>
</evidence>
<evidence type="ECO:0000303" key="4">
    <source>
    </source>
</evidence>
<evidence type="ECO:0000305" key="5"/>
<evidence type="ECO:0000305" key="6">
    <source>
    </source>
</evidence>
<name>RLR31_PLAVT</name>
<proteinExistence type="inferred from homology"/>
<protein>
    <recommendedName>
        <fullName evidence="4">Secreted RxLR effector protein 31</fullName>
    </recommendedName>
</protein>